<organism>
    <name type="scientific">Mus musculus</name>
    <name type="common">Mouse</name>
    <dbReference type="NCBI Taxonomy" id="10090"/>
    <lineage>
        <taxon>Eukaryota</taxon>
        <taxon>Metazoa</taxon>
        <taxon>Chordata</taxon>
        <taxon>Craniata</taxon>
        <taxon>Vertebrata</taxon>
        <taxon>Euteleostomi</taxon>
        <taxon>Mammalia</taxon>
        <taxon>Eutheria</taxon>
        <taxon>Euarchontoglires</taxon>
        <taxon>Glires</taxon>
        <taxon>Rodentia</taxon>
        <taxon>Myomorpha</taxon>
        <taxon>Muroidea</taxon>
        <taxon>Muridae</taxon>
        <taxon>Murinae</taxon>
        <taxon>Mus</taxon>
        <taxon>Mus</taxon>
    </lineage>
</organism>
<evidence type="ECO:0000250" key="1"/>
<evidence type="ECO:0000250" key="2">
    <source>
        <dbReference type="UniProtKB" id="P11831"/>
    </source>
</evidence>
<evidence type="ECO:0000255" key="3">
    <source>
        <dbReference type="PROSITE-ProRule" id="PRU00251"/>
    </source>
</evidence>
<evidence type="ECO:0000256" key="4">
    <source>
        <dbReference type="SAM" id="MobiDB-lite"/>
    </source>
</evidence>
<evidence type="ECO:0000269" key="5">
    <source>
    </source>
</evidence>
<evidence type="ECO:0000269" key="6">
    <source>
    </source>
</evidence>
<evidence type="ECO:0000269" key="7">
    <source>
    </source>
</evidence>
<evidence type="ECO:0000269" key="8">
    <source>
    </source>
</evidence>
<evidence type="ECO:0000269" key="9">
    <source>
    </source>
</evidence>
<evidence type="ECO:0000269" key="10">
    <source>
    </source>
</evidence>
<evidence type="ECO:0000269" key="11">
    <source>
    </source>
</evidence>
<evidence type="ECO:0000269" key="12">
    <source>
    </source>
</evidence>
<evidence type="ECO:0000269" key="13">
    <source>
    </source>
</evidence>
<evidence type="ECO:0007744" key="14">
    <source>
    </source>
</evidence>
<evidence type="ECO:0007744" key="15">
    <source>
    </source>
</evidence>
<evidence type="ECO:0007744" key="16">
    <source>
    </source>
</evidence>
<name>SRF_MOUSE</name>
<reference key="1">
    <citation type="submission" date="2000-02" db="EMBL/GenBank/DDBJ databases">
        <title>Serum response factor.</title>
        <authorList>
            <person name="Miwa T."/>
        </authorList>
    </citation>
    <scope>NUCLEOTIDE SEQUENCE [GENOMIC DNA]</scope>
</reference>
<reference key="2">
    <citation type="journal article" date="2004" name="Genome Res.">
        <title>The status, quality, and expansion of the NIH full-length cDNA project: the Mammalian Gene Collection (MGC).</title>
        <authorList>
            <consortium name="The MGC Project Team"/>
        </authorList>
    </citation>
    <scope>NUCLEOTIDE SEQUENCE [LARGE SCALE MRNA]</scope>
    <source>
        <strain>C57BL/6J</strain>
        <tissue>Brain</tissue>
    </source>
</reference>
<reference key="3">
    <citation type="journal article" date="2003" name="Cell">
        <title>Actin dynamics control SRF activity by regulation of its coactivator MAL.</title>
        <authorList>
            <person name="Miralles F."/>
            <person name="Posern G."/>
            <person name="Zaromytidou A.I."/>
            <person name="Treisman R."/>
        </authorList>
    </citation>
    <scope>FUNCTION</scope>
    <scope>INTERACTION WITH MRTFA</scope>
</reference>
<reference key="4">
    <citation type="journal article" date="2004" name="J. Biol. Chem.">
        <title>Identification of a novel serum response factor cofactor in cardiac gene regulation.</title>
        <authorList>
            <person name="Zhang X."/>
            <person name="Azhar G."/>
            <person name="Zhong Y."/>
            <person name="Wei J.Y."/>
        </authorList>
    </citation>
    <scope>INTERACTION WITH SRFBP1</scope>
    <scope>SUBUNIT</scope>
</reference>
<reference key="5">
    <citation type="journal article" date="2004" name="Mol. Cell. Biol.">
        <title>Targeted inactivation of serum response factor in the developing heart results in myocardial defects and embryonic lethality.</title>
        <authorList>
            <person name="Parlakian A."/>
            <person name="Tuil D."/>
            <person name="Hamard G."/>
            <person name="Tavernier G."/>
            <person name="Hentzen D."/>
            <person name="Concordet J.-P."/>
            <person name="Paulin D."/>
            <person name="Li Z."/>
            <person name="Daegelen D."/>
        </authorList>
    </citation>
    <scope>FUNCTION</scope>
    <scope>DISRUPTION PHENOTYPE</scope>
</reference>
<reference key="6">
    <citation type="journal article" date="2006" name="Biochem. Biophys. Res. Commun.">
        <title>Zipzap/p200 is a novel zinc finger protein contributing to cardiac gene regulation.</title>
        <authorList>
            <person name="Zhang X."/>
            <person name="Azhar G."/>
            <person name="Zhong Y."/>
            <person name="Wei J.Y."/>
        </authorList>
    </citation>
    <scope>INTERACTION WITH ARID2</scope>
    <scope>SUBUNIT</scope>
</reference>
<reference key="7">
    <citation type="journal article" date="2006" name="J. Biol. Chem.">
        <title>Co-activation of atrial natriuretic factor promoter by Tip60 and serum response factor.</title>
        <authorList>
            <person name="Kim M.S."/>
            <person name="Merlo X."/>
            <person name="Wilson C."/>
            <person name="Lough J."/>
        </authorList>
    </citation>
    <scope>INTERACTION WITH KAT5</scope>
</reference>
<reference key="8">
    <citation type="journal article" date="2006" name="J. Mol. Biol.">
        <title>Physical and functional interactions between the prostate suppressor homeoprotein NKX3.1 and serum response factor.</title>
        <authorList>
            <person name="Ju J.H."/>
            <person name="Maeng J.S."/>
            <person name="Zemedkun M."/>
            <person name="Ahronovitz N."/>
            <person name="Mack J.W."/>
            <person name="Ferretti J.A."/>
            <person name="Gelmann E.P."/>
            <person name="Gruschus J.M."/>
        </authorList>
    </citation>
    <scope>INTERACTION WITH NKX3-1</scope>
</reference>
<reference key="9">
    <citation type="journal article" date="2007" name="Proc. Natl. Acad. Sci. U.S.A.">
        <title>Large-scale phosphorylation analysis of mouse liver.</title>
        <authorList>
            <person name="Villen J."/>
            <person name="Beausoleil S.A."/>
            <person name="Gerber S.A."/>
            <person name="Gygi S.P."/>
        </authorList>
    </citation>
    <scope>PHOSPHORYLATION [LARGE SCALE ANALYSIS] AT SER-220</scope>
    <scope>IDENTIFICATION BY MASS SPECTROMETRY [LARGE SCALE ANALYSIS]</scope>
    <source>
        <tissue>Liver</tissue>
    </source>
</reference>
<reference key="10">
    <citation type="journal article" date="2009" name="Mol. Cell. Proteomics">
        <title>Large scale localization of protein phosphorylation by use of electron capture dissociation mass spectrometry.</title>
        <authorList>
            <person name="Sweet S.M."/>
            <person name="Bailey C.M."/>
            <person name="Cunningham D.L."/>
            <person name="Heath J.K."/>
            <person name="Cooper H.J."/>
        </authorList>
    </citation>
    <scope>PHOSPHORYLATION [LARGE SCALE ANALYSIS] AT SER-220</scope>
    <scope>IDENTIFICATION BY MASS SPECTROMETRY [LARGE SCALE ANALYSIS]</scope>
    <source>
        <tissue>Embryonic fibroblast</tissue>
    </source>
</reference>
<reference key="11">
    <citation type="journal article" date="2009" name="Nat. Cell Biol.">
        <title>SCAI acts as a suppressor of cancer cell invasion through the transcriptional control of beta1-integrin.</title>
        <authorList>
            <person name="Brandt D.T."/>
            <person name="Baarlink C."/>
            <person name="Kitzing T.M."/>
            <person name="Kremmer E."/>
            <person name="Ivaska J."/>
            <person name="Nollau P."/>
            <person name="Grosse R."/>
        </authorList>
    </citation>
    <scope>FUNCTION</scope>
    <scope>INTERACTION WITH MRTFA AND SCAI</scope>
    <scope>SUBCELLULAR LOCATION</scope>
</reference>
<reference key="12">
    <citation type="journal article" date="2010" name="Cell">
        <title>A tissue-specific atlas of mouse protein phosphorylation and expression.</title>
        <authorList>
            <person name="Huttlin E.L."/>
            <person name="Jedrychowski M.P."/>
            <person name="Elias J.E."/>
            <person name="Goswami T."/>
            <person name="Rad R."/>
            <person name="Beausoleil S.A."/>
            <person name="Villen J."/>
            <person name="Haas W."/>
            <person name="Sowa M.E."/>
            <person name="Gygi S.P."/>
        </authorList>
    </citation>
    <scope>PHOSPHORYLATION [LARGE SCALE ANALYSIS] AT SER-220</scope>
    <scope>IDENTIFICATION BY MASS SPECTROMETRY [LARGE SCALE ANALYSIS]</scope>
    <source>
        <tissue>Brown adipose tissue</tissue>
        <tissue>Kidney</tissue>
        <tissue>Liver</tissue>
        <tissue>Lung</tissue>
        <tissue>Pancreas</tissue>
        <tissue>Spleen</tissue>
        <tissue>Testis</tissue>
    </source>
</reference>
<reference key="13">
    <citation type="journal article" date="2014" name="Genes Dev.">
        <title>Rho-actin signaling to the MRTF coactivators dominates the immediate transcriptional response to serum in fibroblasts.</title>
        <authorList>
            <person name="Esnault C."/>
            <person name="Stewart A."/>
            <person name="Gualdrini F."/>
            <person name="East P."/>
            <person name="Horswell S."/>
            <person name="Matthews N."/>
            <person name="Treisman R."/>
        </authorList>
    </citation>
    <scope>FUNCTION</scope>
</reference>
<reference key="14">
    <citation type="journal article" date="2021" name="Mol. Cell. Biochem.">
        <title>Purine-rich element binding protein B attenuates the coactivator function of myocardin by a novel molecular mechanism of smooth muscle gene repression.</title>
        <authorList>
            <person name="Ferris L.A."/>
            <person name="Foote A.T."/>
            <person name="Wang S.X."/>
            <person name="Kelm R.J. Jr."/>
        </authorList>
    </citation>
    <scope>INTERACTION WITH PURB</scope>
</reference>
<dbReference type="EMBL" id="AB038376">
    <property type="protein sequence ID" value="BAA92314.1"/>
    <property type="molecule type" value="Genomic_DNA"/>
</dbReference>
<dbReference type="EMBL" id="BC051950">
    <property type="protein sequence ID" value="AAH51950.1"/>
    <property type="molecule type" value="mRNA"/>
</dbReference>
<dbReference type="CCDS" id="CCDS28831.1"/>
<dbReference type="RefSeq" id="NP_065239.1">
    <property type="nucleotide sequence ID" value="NM_020493.2"/>
</dbReference>
<dbReference type="SMR" id="Q9JM73"/>
<dbReference type="BioGRID" id="203497">
    <property type="interactions" value="6"/>
</dbReference>
<dbReference type="CORUM" id="Q9JM73"/>
<dbReference type="DIP" id="DIP-49624N"/>
<dbReference type="FunCoup" id="Q9JM73">
    <property type="interactions" value="3325"/>
</dbReference>
<dbReference type="IntAct" id="Q9JM73">
    <property type="interactions" value="4"/>
</dbReference>
<dbReference type="STRING" id="10090.ENSMUSP00000015749"/>
<dbReference type="GlyCosmos" id="Q9JM73">
    <property type="glycosylation" value="5 sites, No reported glycans"/>
</dbReference>
<dbReference type="GlyGen" id="Q9JM73">
    <property type="glycosylation" value="10 sites, 1 O-linked glycan (7 sites)"/>
</dbReference>
<dbReference type="iPTMnet" id="Q9JM73"/>
<dbReference type="PhosphoSitePlus" id="Q9JM73"/>
<dbReference type="jPOST" id="Q9JM73"/>
<dbReference type="PaxDb" id="10090-ENSMUSP00000015749"/>
<dbReference type="PeptideAtlas" id="Q9JM73"/>
<dbReference type="ProteomicsDB" id="257398"/>
<dbReference type="Pumba" id="Q9JM73"/>
<dbReference type="Antibodypedia" id="900">
    <property type="antibodies" value="719 antibodies from 41 providers"/>
</dbReference>
<dbReference type="DNASU" id="20807"/>
<dbReference type="Ensembl" id="ENSMUST00000015749.7">
    <property type="protein sequence ID" value="ENSMUSP00000015749.6"/>
    <property type="gene ID" value="ENSMUSG00000015605.7"/>
</dbReference>
<dbReference type="GeneID" id="20807"/>
<dbReference type="KEGG" id="mmu:20807"/>
<dbReference type="UCSC" id="uc008ctg.1">
    <property type="organism name" value="mouse"/>
</dbReference>
<dbReference type="AGR" id="MGI:106658"/>
<dbReference type="CTD" id="6722"/>
<dbReference type="MGI" id="MGI:106658">
    <property type="gene designation" value="Srf"/>
</dbReference>
<dbReference type="VEuPathDB" id="HostDB:ENSMUSG00000015605"/>
<dbReference type="eggNOG" id="KOG0015">
    <property type="taxonomic scope" value="Eukaryota"/>
</dbReference>
<dbReference type="GeneTree" id="ENSGT00400000022158"/>
<dbReference type="HOGENOM" id="CLU_042048_1_0_1"/>
<dbReference type="InParanoid" id="Q9JM73"/>
<dbReference type="OMA" id="GCLKREA"/>
<dbReference type="OrthoDB" id="2284405at2759"/>
<dbReference type="PhylomeDB" id="Q9JM73"/>
<dbReference type="TreeFam" id="TF318482"/>
<dbReference type="Reactome" id="R-MMU-5663220">
    <property type="pathway name" value="RHO GTPases Activate Formins"/>
</dbReference>
<dbReference type="Reactome" id="R-MMU-9031628">
    <property type="pathway name" value="NGF-stimulated transcription"/>
</dbReference>
<dbReference type="BioGRID-ORCS" id="20807">
    <property type="hits" value="8 hits in 80 CRISPR screens"/>
</dbReference>
<dbReference type="ChiTaRS" id="Srf">
    <property type="organism name" value="mouse"/>
</dbReference>
<dbReference type="PRO" id="PR:Q9JM73"/>
<dbReference type="Proteomes" id="UP000000589">
    <property type="component" value="Chromosome 17"/>
</dbReference>
<dbReference type="RNAct" id="Q9JM73">
    <property type="molecule type" value="protein"/>
</dbReference>
<dbReference type="Bgee" id="ENSMUSG00000015605">
    <property type="expression patterns" value="Expressed in embryonic post-anal tail and 157 other cell types or tissues"/>
</dbReference>
<dbReference type="ExpressionAtlas" id="Q9JM73">
    <property type="expression patterns" value="baseline and differential"/>
</dbReference>
<dbReference type="GO" id="GO:0000785">
    <property type="term" value="C:chromatin"/>
    <property type="evidence" value="ECO:0000314"/>
    <property type="project" value="BHF-UCL"/>
</dbReference>
<dbReference type="GO" id="GO:0005737">
    <property type="term" value="C:cytoplasm"/>
    <property type="evidence" value="ECO:0000314"/>
    <property type="project" value="MGI"/>
</dbReference>
<dbReference type="GO" id="GO:0005654">
    <property type="term" value="C:nucleoplasm"/>
    <property type="evidence" value="ECO:0000304"/>
    <property type="project" value="Reactome"/>
</dbReference>
<dbReference type="GO" id="GO:0005634">
    <property type="term" value="C:nucleus"/>
    <property type="evidence" value="ECO:0000314"/>
    <property type="project" value="MGI"/>
</dbReference>
<dbReference type="GO" id="GO:0003682">
    <property type="term" value="F:chromatin binding"/>
    <property type="evidence" value="ECO:0000314"/>
    <property type="project" value="MGI"/>
</dbReference>
<dbReference type="GO" id="GO:0031490">
    <property type="term" value="F:chromatin DNA binding"/>
    <property type="evidence" value="ECO:0000314"/>
    <property type="project" value="MGI"/>
</dbReference>
<dbReference type="GO" id="GO:0003677">
    <property type="term" value="F:DNA binding"/>
    <property type="evidence" value="ECO:0000314"/>
    <property type="project" value="MGI"/>
</dbReference>
<dbReference type="GO" id="GO:0001228">
    <property type="term" value="F:DNA-binding transcription activator activity, RNA polymerase II-specific"/>
    <property type="evidence" value="ECO:0000314"/>
    <property type="project" value="BHF-UCL"/>
</dbReference>
<dbReference type="GO" id="GO:0003700">
    <property type="term" value="F:DNA-binding transcription factor activity"/>
    <property type="evidence" value="ECO:0000314"/>
    <property type="project" value="UniProtKB"/>
</dbReference>
<dbReference type="GO" id="GO:0000981">
    <property type="term" value="F:DNA-binding transcription factor activity, RNA polymerase II-specific"/>
    <property type="evidence" value="ECO:0000314"/>
    <property type="project" value="MGI"/>
</dbReference>
<dbReference type="GO" id="GO:0042826">
    <property type="term" value="F:histone deacetylase binding"/>
    <property type="evidence" value="ECO:0007669"/>
    <property type="project" value="Ensembl"/>
</dbReference>
<dbReference type="GO" id="GO:0070878">
    <property type="term" value="F:primary miRNA binding"/>
    <property type="evidence" value="ECO:0000314"/>
    <property type="project" value="BHF-UCL"/>
</dbReference>
<dbReference type="GO" id="GO:0042803">
    <property type="term" value="F:protein homodimerization activity"/>
    <property type="evidence" value="ECO:0007669"/>
    <property type="project" value="Ensembl"/>
</dbReference>
<dbReference type="GO" id="GO:0000978">
    <property type="term" value="F:RNA polymerase II cis-regulatory region sequence-specific DNA binding"/>
    <property type="evidence" value="ECO:0000314"/>
    <property type="project" value="BHF-UCL"/>
</dbReference>
<dbReference type="GO" id="GO:0061629">
    <property type="term" value="F:RNA polymerase II-specific DNA-binding transcription factor binding"/>
    <property type="evidence" value="ECO:0000353"/>
    <property type="project" value="BHF-UCL"/>
</dbReference>
<dbReference type="GO" id="GO:0043565">
    <property type="term" value="F:sequence-specific DNA binding"/>
    <property type="evidence" value="ECO:0000314"/>
    <property type="project" value="MGI"/>
</dbReference>
<dbReference type="GO" id="GO:0010736">
    <property type="term" value="F:serum response element binding"/>
    <property type="evidence" value="ECO:0000314"/>
    <property type="project" value="UniProtKB"/>
</dbReference>
<dbReference type="GO" id="GO:0030036">
    <property type="term" value="P:actin cytoskeleton organization"/>
    <property type="evidence" value="ECO:0000314"/>
    <property type="project" value="UniProtKB"/>
</dbReference>
<dbReference type="GO" id="GO:0007015">
    <property type="term" value="P:actin filament organization"/>
    <property type="evidence" value="ECO:0000315"/>
    <property type="project" value="MGI"/>
</dbReference>
<dbReference type="GO" id="GO:0008306">
    <property type="term" value="P:associative learning"/>
    <property type="evidence" value="ECO:0000315"/>
    <property type="project" value="MGI"/>
</dbReference>
<dbReference type="GO" id="GO:0048675">
    <property type="term" value="P:axon extension"/>
    <property type="evidence" value="ECO:0000315"/>
    <property type="project" value="MGI"/>
</dbReference>
<dbReference type="GO" id="GO:0070830">
    <property type="term" value="P:bicellular tight junction assembly"/>
    <property type="evidence" value="ECO:0000315"/>
    <property type="project" value="MGI"/>
</dbReference>
<dbReference type="GO" id="GO:0001569">
    <property type="term" value="P:branching involved in blood vessel morphogenesis"/>
    <property type="evidence" value="ECO:0000315"/>
    <property type="project" value="MGI"/>
</dbReference>
<dbReference type="GO" id="GO:0060532">
    <property type="term" value="P:bronchus cartilage development"/>
    <property type="evidence" value="ECO:0000315"/>
    <property type="project" value="MGI"/>
</dbReference>
<dbReference type="GO" id="GO:0060379">
    <property type="term" value="P:cardiac muscle cell myoblast differentiation"/>
    <property type="evidence" value="ECO:0000316"/>
    <property type="project" value="BHF-UCL"/>
</dbReference>
<dbReference type="GO" id="GO:0055003">
    <property type="term" value="P:cardiac myofibril assembly"/>
    <property type="evidence" value="ECO:0000315"/>
    <property type="project" value="MGI"/>
</dbReference>
<dbReference type="GO" id="GO:0060947">
    <property type="term" value="P:cardiac vascular smooth muscle cell differentiation"/>
    <property type="evidence" value="ECO:0000315"/>
    <property type="project" value="MGI"/>
</dbReference>
<dbReference type="GO" id="GO:0002042">
    <property type="term" value="P:cell migration involved in sprouting angiogenesis"/>
    <property type="evidence" value="ECO:0000315"/>
    <property type="project" value="MGI"/>
</dbReference>
<dbReference type="GO" id="GO:0098609">
    <property type="term" value="P:cell-cell adhesion"/>
    <property type="evidence" value="ECO:0000315"/>
    <property type="project" value="MGI"/>
</dbReference>
<dbReference type="GO" id="GO:0007160">
    <property type="term" value="P:cell-matrix adhesion"/>
    <property type="evidence" value="ECO:0000315"/>
    <property type="project" value="MGI"/>
</dbReference>
<dbReference type="GO" id="GO:0071333">
    <property type="term" value="P:cellular response to glucose stimulus"/>
    <property type="evidence" value="ECO:0007669"/>
    <property type="project" value="Ensembl"/>
</dbReference>
<dbReference type="GO" id="GO:0090398">
    <property type="term" value="P:cellular senescence"/>
    <property type="evidence" value="ECO:0007669"/>
    <property type="project" value="Ensembl"/>
</dbReference>
<dbReference type="GO" id="GO:0030038">
    <property type="term" value="P:contractile actin filament bundle assembly"/>
    <property type="evidence" value="ECO:0000315"/>
    <property type="project" value="MGI"/>
</dbReference>
<dbReference type="GO" id="GO:0048589">
    <property type="term" value="P:developmental growth"/>
    <property type="evidence" value="ECO:0000315"/>
    <property type="project" value="MGI"/>
</dbReference>
<dbReference type="GO" id="GO:0035912">
    <property type="term" value="P:dorsal aorta morphogenesis"/>
    <property type="evidence" value="ECO:0000315"/>
    <property type="project" value="MGI"/>
</dbReference>
<dbReference type="GO" id="GO:0090136">
    <property type="term" value="P:epithelial cell-cell adhesion"/>
    <property type="evidence" value="ECO:0000315"/>
    <property type="project" value="MGI"/>
</dbReference>
<dbReference type="GO" id="GO:0010669">
    <property type="term" value="P:epithelial structure maintenance"/>
    <property type="evidence" value="ECO:0000315"/>
    <property type="project" value="MGI"/>
</dbReference>
<dbReference type="GO" id="GO:0048821">
    <property type="term" value="P:erythrocyte development"/>
    <property type="evidence" value="ECO:0000315"/>
    <property type="project" value="MGI"/>
</dbReference>
<dbReference type="GO" id="GO:0061436">
    <property type="term" value="P:establishment of skin barrier"/>
    <property type="evidence" value="ECO:0000315"/>
    <property type="project" value="MGI"/>
</dbReference>
<dbReference type="GO" id="GO:0061029">
    <property type="term" value="P:eyelid development in camera-type eye"/>
    <property type="evidence" value="ECO:0000315"/>
    <property type="project" value="MGI"/>
</dbReference>
<dbReference type="GO" id="GO:0060324">
    <property type="term" value="P:face development"/>
    <property type="evidence" value="ECO:0000315"/>
    <property type="project" value="MGI"/>
</dbReference>
<dbReference type="GO" id="GO:0046847">
    <property type="term" value="P:filopodium assembly"/>
    <property type="evidence" value="ECO:0000315"/>
    <property type="project" value="MGI"/>
</dbReference>
<dbReference type="GO" id="GO:0030900">
    <property type="term" value="P:forebrain development"/>
    <property type="evidence" value="ECO:0000315"/>
    <property type="project" value="MGI"/>
</dbReference>
<dbReference type="GO" id="GO:0007369">
    <property type="term" value="P:gastrulation"/>
    <property type="evidence" value="ECO:0000315"/>
    <property type="project" value="MGI"/>
</dbReference>
<dbReference type="GO" id="GO:0007507">
    <property type="term" value="P:heart development"/>
    <property type="evidence" value="ECO:0000315"/>
    <property type="project" value="MGI"/>
</dbReference>
<dbReference type="GO" id="GO:0001947">
    <property type="term" value="P:heart looping"/>
    <property type="evidence" value="ECO:0000315"/>
    <property type="project" value="MGI"/>
</dbReference>
<dbReference type="GO" id="GO:0060347">
    <property type="term" value="P:heart trabecula formation"/>
    <property type="evidence" value="ECO:0000315"/>
    <property type="project" value="MGI"/>
</dbReference>
<dbReference type="GO" id="GO:0060218">
    <property type="term" value="P:hematopoietic stem cell differentiation"/>
    <property type="evidence" value="ECO:0000315"/>
    <property type="project" value="MGI"/>
</dbReference>
<dbReference type="GO" id="GO:0021766">
    <property type="term" value="P:hippocampus development"/>
    <property type="evidence" value="ECO:0000315"/>
    <property type="project" value="MGI"/>
</dbReference>
<dbReference type="GO" id="GO:0001701">
    <property type="term" value="P:in utero embryonic development"/>
    <property type="evidence" value="ECO:0000315"/>
    <property type="project" value="MGI"/>
</dbReference>
<dbReference type="GO" id="GO:0002521">
    <property type="term" value="P:leukocyte differentiation"/>
    <property type="evidence" value="ECO:0000315"/>
    <property type="project" value="MGI"/>
</dbReference>
<dbReference type="GO" id="GO:0007616">
    <property type="term" value="P:long-term memory"/>
    <property type="evidence" value="ECO:0007669"/>
    <property type="project" value="Ensembl"/>
</dbReference>
<dbReference type="GO" id="GO:0060292">
    <property type="term" value="P:long-term synaptic depression"/>
    <property type="evidence" value="ECO:0000315"/>
    <property type="project" value="MGI"/>
</dbReference>
<dbReference type="GO" id="GO:0060425">
    <property type="term" value="P:lung morphogenesis"/>
    <property type="evidence" value="ECO:0000315"/>
    <property type="project" value="MGI"/>
</dbReference>
<dbReference type="GO" id="GO:0061145">
    <property type="term" value="P:lung smooth muscle development"/>
    <property type="evidence" value="ECO:0000315"/>
    <property type="project" value="MGI"/>
</dbReference>
<dbReference type="GO" id="GO:0035855">
    <property type="term" value="P:megakaryocyte development"/>
    <property type="evidence" value="ECO:0000315"/>
    <property type="project" value="MGI"/>
</dbReference>
<dbReference type="GO" id="GO:0001707">
    <property type="term" value="P:mesoderm formation"/>
    <property type="evidence" value="ECO:0000315"/>
    <property type="project" value="MGI"/>
</dbReference>
<dbReference type="GO" id="GO:0002011">
    <property type="term" value="P:morphogenesis of an epithelial sheet"/>
    <property type="evidence" value="ECO:0000315"/>
    <property type="project" value="MGI"/>
</dbReference>
<dbReference type="GO" id="GO:0046716">
    <property type="term" value="P:muscle cell cellular homeostasis"/>
    <property type="evidence" value="ECO:0000315"/>
    <property type="project" value="MGI"/>
</dbReference>
<dbReference type="GO" id="GO:1900222">
    <property type="term" value="P:negative regulation of amyloid-beta clearance"/>
    <property type="evidence" value="ECO:0007669"/>
    <property type="project" value="Ensembl"/>
</dbReference>
<dbReference type="GO" id="GO:0030336">
    <property type="term" value="P:negative regulation of cell migration"/>
    <property type="evidence" value="ECO:0007669"/>
    <property type="project" value="Ensembl"/>
</dbReference>
<dbReference type="GO" id="GO:0008285">
    <property type="term" value="P:negative regulation of cell population proliferation"/>
    <property type="evidence" value="ECO:0007669"/>
    <property type="project" value="Ensembl"/>
</dbReference>
<dbReference type="GO" id="GO:1902894">
    <property type="term" value="P:negative regulation of miRNA transcription"/>
    <property type="evidence" value="ECO:0000314"/>
    <property type="project" value="BHF-UCL"/>
</dbReference>
<dbReference type="GO" id="GO:0001764">
    <property type="term" value="P:neuron migration"/>
    <property type="evidence" value="ECO:0000315"/>
    <property type="project" value="MGI"/>
</dbReference>
<dbReference type="GO" id="GO:0031175">
    <property type="term" value="P:neuron projection development"/>
    <property type="evidence" value="ECO:0000315"/>
    <property type="project" value="MGI"/>
</dbReference>
<dbReference type="GO" id="GO:0030168">
    <property type="term" value="P:platelet activation"/>
    <property type="evidence" value="ECO:0000315"/>
    <property type="project" value="MGI"/>
</dbReference>
<dbReference type="GO" id="GO:0030220">
    <property type="term" value="P:platelet formation"/>
    <property type="evidence" value="ECO:0000315"/>
    <property type="project" value="MGI"/>
</dbReference>
<dbReference type="GO" id="GO:0045773">
    <property type="term" value="P:positive regulation of axon extension"/>
    <property type="evidence" value="ECO:0000315"/>
    <property type="project" value="MGI"/>
</dbReference>
<dbReference type="GO" id="GO:0045597">
    <property type="term" value="P:positive regulation of cell differentiation"/>
    <property type="evidence" value="ECO:0000266"/>
    <property type="project" value="MGI"/>
</dbReference>
<dbReference type="GO" id="GO:0045893">
    <property type="term" value="P:positive regulation of DNA-templated transcription"/>
    <property type="evidence" value="ECO:0000314"/>
    <property type="project" value="MGI"/>
</dbReference>
<dbReference type="GO" id="GO:0051491">
    <property type="term" value="P:positive regulation of filopodium assembly"/>
    <property type="evidence" value="ECO:0000315"/>
    <property type="project" value="MGI"/>
</dbReference>
<dbReference type="GO" id="GO:1902895">
    <property type="term" value="P:positive regulation of miRNA transcription"/>
    <property type="evidence" value="ECO:0000314"/>
    <property type="project" value="BHF-UCL"/>
</dbReference>
<dbReference type="GO" id="GO:0045987">
    <property type="term" value="P:positive regulation of smooth muscle contraction"/>
    <property type="evidence" value="ECO:0007669"/>
    <property type="project" value="Ensembl"/>
</dbReference>
<dbReference type="GO" id="GO:0046016">
    <property type="term" value="P:positive regulation of transcription by glucose"/>
    <property type="evidence" value="ECO:0007669"/>
    <property type="project" value="Ensembl"/>
</dbReference>
<dbReference type="GO" id="GO:0045944">
    <property type="term" value="P:positive regulation of transcription by RNA polymerase II"/>
    <property type="evidence" value="ECO:0000314"/>
    <property type="project" value="UniProtKB"/>
</dbReference>
<dbReference type="GO" id="GO:0060261">
    <property type="term" value="P:positive regulation of transcription initiation by RNA polymerase II"/>
    <property type="evidence" value="ECO:0007669"/>
    <property type="project" value="Ensembl"/>
</dbReference>
<dbReference type="GO" id="GO:0045059">
    <property type="term" value="P:positive thymic T cell selection"/>
    <property type="evidence" value="ECO:0000315"/>
    <property type="project" value="MGI"/>
</dbReference>
<dbReference type="GO" id="GO:0090009">
    <property type="term" value="P:primitive streak formation"/>
    <property type="evidence" value="ECO:0000315"/>
    <property type="project" value="MGI"/>
</dbReference>
<dbReference type="GO" id="GO:0030155">
    <property type="term" value="P:regulation of cell adhesion"/>
    <property type="evidence" value="ECO:0000315"/>
    <property type="project" value="MGI"/>
</dbReference>
<dbReference type="GO" id="GO:0006355">
    <property type="term" value="P:regulation of DNA-templated transcription"/>
    <property type="evidence" value="ECO:0000314"/>
    <property type="project" value="MGI"/>
</dbReference>
<dbReference type="GO" id="GO:0034097">
    <property type="term" value="P:response to cytokine"/>
    <property type="evidence" value="ECO:0007669"/>
    <property type="project" value="Ensembl"/>
</dbReference>
<dbReference type="GO" id="GO:0009725">
    <property type="term" value="P:response to hormone"/>
    <property type="evidence" value="ECO:0007669"/>
    <property type="project" value="Ensembl"/>
</dbReference>
<dbReference type="GO" id="GO:0001666">
    <property type="term" value="P:response to hypoxia"/>
    <property type="evidence" value="ECO:0007669"/>
    <property type="project" value="Ensembl"/>
</dbReference>
<dbReference type="GO" id="GO:0045214">
    <property type="term" value="P:sarcomere organization"/>
    <property type="evidence" value="ECO:0000315"/>
    <property type="project" value="MGI"/>
</dbReference>
<dbReference type="GO" id="GO:0043589">
    <property type="term" value="P:skin morphogenesis"/>
    <property type="evidence" value="ECO:0000315"/>
    <property type="project" value="MGI"/>
</dbReference>
<dbReference type="GO" id="GO:0043149">
    <property type="term" value="P:stress fiber assembly"/>
    <property type="evidence" value="ECO:0000315"/>
    <property type="project" value="MGI"/>
</dbReference>
<dbReference type="GO" id="GO:0022028">
    <property type="term" value="P:tangential migration from the subventricular zone to the olfactory bulb"/>
    <property type="evidence" value="ECO:0000315"/>
    <property type="project" value="MGI"/>
</dbReference>
<dbReference type="GO" id="GO:0048538">
    <property type="term" value="P:thymus development"/>
    <property type="evidence" value="ECO:0000315"/>
    <property type="project" value="MGI"/>
</dbReference>
<dbReference type="GO" id="GO:0030878">
    <property type="term" value="P:thyroid gland development"/>
    <property type="evidence" value="ECO:0000315"/>
    <property type="project" value="MGI"/>
</dbReference>
<dbReference type="GO" id="GO:0060534">
    <property type="term" value="P:trachea cartilage development"/>
    <property type="evidence" value="ECO:0000315"/>
    <property type="project" value="MGI"/>
</dbReference>
<dbReference type="GO" id="GO:0006366">
    <property type="term" value="P:transcription by RNA polymerase II"/>
    <property type="evidence" value="ECO:0000315"/>
    <property type="project" value="MGI"/>
</dbReference>
<dbReference type="GO" id="GO:0001829">
    <property type="term" value="P:trophectodermal cell differentiation"/>
    <property type="evidence" value="ECO:0000266"/>
    <property type="project" value="MGI"/>
</dbReference>
<dbReference type="CDD" id="cd00266">
    <property type="entry name" value="MADS_SRF_like"/>
    <property type="match status" value="1"/>
</dbReference>
<dbReference type="FunFam" id="3.40.1810.10:FF:000002">
    <property type="entry name" value="Serum response factor b"/>
    <property type="match status" value="1"/>
</dbReference>
<dbReference type="Gene3D" id="3.40.1810.10">
    <property type="entry name" value="Transcription factor, MADS-box"/>
    <property type="match status" value="1"/>
</dbReference>
<dbReference type="InterPro" id="IPR050142">
    <property type="entry name" value="MADS-box/MEF2_TF"/>
</dbReference>
<dbReference type="InterPro" id="IPR033897">
    <property type="entry name" value="SRF-like_MADS-box"/>
</dbReference>
<dbReference type="InterPro" id="IPR002100">
    <property type="entry name" value="TF_MADSbox"/>
</dbReference>
<dbReference type="InterPro" id="IPR036879">
    <property type="entry name" value="TF_MADSbox_sf"/>
</dbReference>
<dbReference type="PANTHER" id="PTHR48019">
    <property type="entry name" value="SERUM RESPONSE FACTOR HOMOLOG"/>
    <property type="match status" value="1"/>
</dbReference>
<dbReference type="Pfam" id="PF00319">
    <property type="entry name" value="SRF-TF"/>
    <property type="match status" value="1"/>
</dbReference>
<dbReference type="PRINTS" id="PR00404">
    <property type="entry name" value="MADSDOMAIN"/>
</dbReference>
<dbReference type="SMART" id="SM00432">
    <property type="entry name" value="MADS"/>
    <property type="match status" value="1"/>
</dbReference>
<dbReference type="SUPFAM" id="SSF55455">
    <property type="entry name" value="SRF-like"/>
    <property type="match status" value="1"/>
</dbReference>
<dbReference type="PROSITE" id="PS00350">
    <property type="entry name" value="MADS_BOX_1"/>
    <property type="match status" value="1"/>
</dbReference>
<dbReference type="PROSITE" id="PS50066">
    <property type="entry name" value="MADS_BOX_2"/>
    <property type="match status" value="1"/>
</dbReference>
<feature type="chain" id="PRO_0000245225" description="Serum response factor">
    <location>
        <begin position="1"/>
        <end position="504"/>
    </location>
</feature>
<feature type="domain" description="MADS-box" evidence="3">
    <location>
        <begin position="137"/>
        <end position="197"/>
    </location>
</feature>
<feature type="DNA-binding region" evidence="1">
    <location>
        <begin position="129"/>
        <end position="218"/>
    </location>
</feature>
<feature type="region of interest" description="Disordered" evidence="4">
    <location>
        <begin position="1"/>
        <end position="94"/>
    </location>
</feature>
<feature type="region of interest" description="Involved in dimerization" evidence="1">
    <location>
        <begin position="164"/>
        <end position="218"/>
    </location>
</feature>
<feature type="region of interest" description="Disordered" evidence="4">
    <location>
        <begin position="215"/>
        <end position="288"/>
    </location>
</feature>
<feature type="region of interest" description="Disordered" evidence="4">
    <location>
        <begin position="359"/>
        <end position="381"/>
    </location>
</feature>
<feature type="compositionally biased region" description="Low complexity" evidence="4">
    <location>
        <begin position="1"/>
        <end position="28"/>
    </location>
</feature>
<feature type="compositionally biased region" description="Gly residues" evidence="4">
    <location>
        <begin position="29"/>
        <end position="51"/>
    </location>
</feature>
<feature type="compositionally biased region" description="Low complexity" evidence="4">
    <location>
        <begin position="61"/>
        <end position="76"/>
    </location>
</feature>
<feature type="compositionally biased region" description="Acidic residues" evidence="4">
    <location>
        <begin position="77"/>
        <end position="87"/>
    </location>
</feature>
<feature type="compositionally biased region" description="Polar residues" evidence="4">
    <location>
        <begin position="264"/>
        <end position="288"/>
    </location>
</feature>
<feature type="compositionally biased region" description="Low complexity" evidence="4">
    <location>
        <begin position="368"/>
        <end position="381"/>
    </location>
</feature>
<feature type="modified residue" description="Phosphoserine" evidence="2">
    <location>
        <position position="73"/>
    </location>
</feature>
<feature type="modified residue" description="Phosphoserine" evidence="2">
    <location>
        <position position="75"/>
    </location>
</feature>
<feature type="modified residue" description="Phosphoserine" evidence="2">
    <location>
        <position position="79"/>
    </location>
</feature>
<feature type="modified residue" description="Phosphoserine" evidence="2">
    <location>
        <position position="81"/>
    </location>
</feature>
<feature type="modified residue" description="Phosphoserine" evidence="2">
    <location>
        <position position="99"/>
    </location>
</feature>
<feature type="modified residue" description="Phosphoserine" evidence="14 15 16">
    <location>
        <position position="220"/>
    </location>
</feature>
<feature type="modified residue" description="Phosphoserine" evidence="2">
    <location>
        <position position="249"/>
    </location>
</feature>
<feature type="modified residue" description="Phosphoserine; by dsDNA kinase" evidence="2">
    <location>
        <position position="431"/>
    </location>
</feature>
<feature type="modified residue" description="Phosphoserine; by dsDNA kinase" evidence="2">
    <location>
        <position position="442"/>
    </location>
</feature>
<feature type="glycosylation site" description="O-linked (GlcNAc) serine" evidence="1">
    <location>
        <position position="273"/>
    </location>
</feature>
<feature type="glycosylation site" description="O-linked (GlcNAc) serine" evidence="1">
    <location>
        <position position="303"/>
    </location>
</feature>
<feature type="glycosylation site" description="O-linked (GlcNAc) serine" evidence="1">
    <location>
        <position position="305"/>
    </location>
</feature>
<feature type="glycosylation site" description="O-linked (GlcNAc) serine" evidence="1">
    <location>
        <position position="312"/>
    </location>
</feature>
<feature type="glycosylation site" description="O-linked (GlcNAc) serine" evidence="1">
    <location>
        <position position="379"/>
    </location>
</feature>
<keyword id="KW-0010">Activator</keyword>
<keyword id="KW-0217">Developmental protein</keyword>
<keyword id="KW-0238">DNA-binding</keyword>
<keyword id="KW-0325">Glycoprotein</keyword>
<keyword id="KW-0539">Nucleus</keyword>
<keyword id="KW-0597">Phosphoprotein</keyword>
<keyword id="KW-1185">Reference proteome</keyword>
<keyword id="KW-0804">Transcription</keyword>
<keyword id="KW-0805">Transcription regulation</keyword>
<proteinExistence type="evidence at protein level"/>
<gene>
    <name type="primary">Srf</name>
</gene>
<sequence length="504" mass="51247">MLPSQAGAAAALGRGSALGGNLNRTPTGRPGGGGGTRGANGGRVPGNGAGLGQSRLEREAAAAAAPTAGALYSGSEGDSESGEEEELGAERRGLKRSLSEMELGVVVGGPEAAAAAAGGYGPVSGAVSGAKPGKKTRGRVKIKMEFIDNKLRRYTTFSKRKTGIMKKAYELSTLTGTQVLLLVASETGHVYTFATRKLQPMITSETGKALIQTCLNSPDSPPRSDPTTDQRMSATGFEEPDLTYQVSESDSSGETKDTLKPAFTVTNLPGTTSTIQTAPSTSTTMQVSSGPSFPITNYLAPVSASVSPSAVSSANGTVLKSTGSGPVSSGGLMQLPTSFTLMPGGAVAQQVPVQAIHVHQAPQQASPSRDSSTDLTQTSSSGTVTLPATIMTSSVPTTVGGHMMYPSPHAVMYAPTSGLADGSLTVLNAFSQAPSTMQVSHSQVQEPGGVPQVFLTAPSGTVQIPVSAVQLHQMAVIGQQAGSSSNLTELQVVNLDATHSTKSE</sequence>
<protein>
    <recommendedName>
        <fullName>Serum response factor</fullName>
        <shortName>SRF</shortName>
    </recommendedName>
</protein>
<accession>Q9JM73</accession>
<comment type="function">
    <text evidence="5 6 11 12">SRF is a transcription factor that binds to the serum response element (SRE), a short sequence of dyad symmetry located 300 bp to the 5' of the site of transcription initiation of some genes (such as FOS) (PubMed:24732378). Together with MRTFA transcription coactivator, controls expression of genes regulating the cytoskeleton during development, morphogenesis and cell migration (PubMed:12732141, PubMed:19350017, PubMed:24732378). The SRF-MRTFA complex activity responds to Rho GTPase-induced changes in cellular globular actin (G-actin) concentration, thereby coupling cytoskeletal gene expression to cytoskeletal dynamics (PubMed:24732378). Required for cardiac differentiation and maturation (PubMed:15169892).</text>
</comment>
<comment type="subunit">
    <text evidence="2 5 7 8 9 10 11 13">Binds DNA as a multimer, probably a dimer (PubMed:15492011, PubMed:16782067). Interacts with MRTFA, forming the SRF-MRTFA nuclear complex which binds the 5'-CArG-3' consensus motif (CArG box) on DNA via SRF (PubMed:12732141, PubMed:19350017). Forms a nuclear ternary complex with MRTFA and SCAI (PubMed:19350017). Interacts with MRTFB (By similarity). Interacts with MLLT7/FOXO4, NKX3A and SSRP1 (By similarity). Interacts with ARID2 (PubMed:16782067). Interacts with SRFBP1 (PubMed:15492011). Interacts with FOXK1 (By similarity). Interacts with LPXN (By similarity). Interacts with OLFM2; the interaction promotes dissociation of SRF from the transcriptional repressor HEY2, facilitates binding of SRF to target genes and promotes smooth muscle differentiation (By similarity). Interacts with NKX3-1 (PubMed:16814806). Interacts with KAT5 (PubMed:16597624). Interacts with PURB (PubMed:33743134).</text>
</comment>
<comment type="interaction">
    <interactant intactId="EBI-493266">
        <id>Q9JM73</id>
    </interactant>
    <interactant intactId="EBI-645275">
        <id>Q3U1N2</id>
        <label>Srebf2</label>
    </interactant>
    <organismsDiffer>false</organismsDiffer>
    <experiments>3</experiments>
</comment>
<comment type="subcellular location">
    <subcellularLocation>
        <location evidence="3 11">Nucleus</location>
    </subcellularLocation>
</comment>
<comment type="PTM">
    <text evidence="2">Phosphorylated by PRKDC.</text>
</comment>
<comment type="disruption phenotype">
    <text evidence="6">Mice lacking Srf in cardiac tissue display lethal cardiac defects between 10.5 and 13.5 dpc, characterized by abnormally thin myocardium, dilated cardiac chambers, poor trabeculation and a disorganised interventricular septum.</text>
</comment>